<feature type="chain" id="PRO_1000010503" description="Acetylglutamate kinase">
    <location>
        <begin position="1"/>
        <end position="283"/>
    </location>
</feature>
<feature type="binding site" evidence="1">
    <location>
        <begin position="64"/>
        <end position="65"/>
    </location>
    <ligand>
        <name>substrate</name>
    </ligand>
</feature>
<feature type="binding site" evidence="1">
    <location>
        <position position="86"/>
    </location>
    <ligand>
        <name>substrate</name>
    </ligand>
</feature>
<feature type="binding site" evidence="1">
    <location>
        <position position="178"/>
    </location>
    <ligand>
        <name>substrate</name>
    </ligand>
</feature>
<feature type="site" description="Transition state stabilizer" evidence="1">
    <location>
        <position position="29"/>
    </location>
</feature>
<feature type="site" description="Transition state stabilizer" evidence="1">
    <location>
        <position position="241"/>
    </location>
</feature>
<proteinExistence type="inferred from homology"/>
<evidence type="ECO:0000255" key="1">
    <source>
        <dbReference type="HAMAP-Rule" id="MF_00082"/>
    </source>
</evidence>
<reference key="1">
    <citation type="journal article" date="2007" name="J. Bacteriol.">
        <title>The complete genome sequence of the lactic acid bacterial paradigm Lactococcus lactis subsp. cremoris MG1363.</title>
        <authorList>
            <person name="Wegmann U."/>
            <person name="O'Connell-Motherway M."/>
            <person name="Zomer A."/>
            <person name="Buist G."/>
            <person name="Shearman C."/>
            <person name="Canchaya C."/>
            <person name="Ventura M."/>
            <person name="Goesmann A."/>
            <person name="Gasson M.J."/>
            <person name="Kuipers O.P."/>
            <person name="van Sinderen D."/>
            <person name="Kok J."/>
        </authorList>
    </citation>
    <scope>NUCLEOTIDE SEQUENCE [LARGE SCALE GENOMIC DNA]</scope>
    <source>
        <strain>MG1363</strain>
    </source>
</reference>
<dbReference type="EC" id="2.7.2.8" evidence="1"/>
<dbReference type="EMBL" id="AM406671">
    <property type="protein sequence ID" value="CAL98327.1"/>
    <property type="molecule type" value="Genomic_DNA"/>
</dbReference>
<dbReference type="RefSeq" id="WP_011835542.1">
    <property type="nucleotide sequence ID" value="NC_009004.1"/>
</dbReference>
<dbReference type="SMR" id="A2RM00"/>
<dbReference type="STRING" id="416870.llmg_1755"/>
<dbReference type="GeneID" id="89632933"/>
<dbReference type="KEGG" id="llm:llmg_1755"/>
<dbReference type="eggNOG" id="COG0548">
    <property type="taxonomic scope" value="Bacteria"/>
</dbReference>
<dbReference type="HOGENOM" id="CLU_053680_0_0_9"/>
<dbReference type="OrthoDB" id="9803155at2"/>
<dbReference type="PhylomeDB" id="A2RM00"/>
<dbReference type="UniPathway" id="UPA00068">
    <property type="reaction ID" value="UER00107"/>
</dbReference>
<dbReference type="Proteomes" id="UP000000364">
    <property type="component" value="Chromosome"/>
</dbReference>
<dbReference type="GO" id="GO:0005737">
    <property type="term" value="C:cytoplasm"/>
    <property type="evidence" value="ECO:0007669"/>
    <property type="project" value="UniProtKB-SubCell"/>
</dbReference>
<dbReference type="GO" id="GO:0003991">
    <property type="term" value="F:acetylglutamate kinase activity"/>
    <property type="evidence" value="ECO:0007669"/>
    <property type="project" value="UniProtKB-UniRule"/>
</dbReference>
<dbReference type="GO" id="GO:0005524">
    <property type="term" value="F:ATP binding"/>
    <property type="evidence" value="ECO:0007669"/>
    <property type="project" value="UniProtKB-UniRule"/>
</dbReference>
<dbReference type="GO" id="GO:0042450">
    <property type="term" value="P:arginine biosynthetic process via ornithine"/>
    <property type="evidence" value="ECO:0007669"/>
    <property type="project" value="UniProtKB-UniRule"/>
</dbReference>
<dbReference type="GO" id="GO:0006526">
    <property type="term" value="P:L-arginine biosynthetic process"/>
    <property type="evidence" value="ECO:0007669"/>
    <property type="project" value="UniProtKB-UniPathway"/>
</dbReference>
<dbReference type="CDD" id="cd04250">
    <property type="entry name" value="AAK_NAGK-C"/>
    <property type="match status" value="1"/>
</dbReference>
<dbReference type="FunFam" id="3.40.1160.10:FF:000004">
    <property type="entry name" value="Acetylglutamate kinase"/>
    <property type="match status" value="1"/>
</dbReference>
<dbReference type="Gene3D" id="3.40.1160.10">
    <property type="entry name" value="Acetylglutamate kinase-like"/>
    <property type="match status" value="1"/>
</dbReference>
<dbReference type="HAMAP" id="MF_00082">
    <property type="entry name" value="ArgB"/>
    <property type="match status" value="1"/>
</dbReference>
<dbReference type="InterPro" id="IPR036393">
    <property type="entry name" value="AceGlu_kinase-like_sf"/>
</dbReference>
<dbReference type="InterPro" id="IPR004662">
    <property type="entry name" value="AcgluKinase_fam"/>
</dbReference>
<dbReference type="InterPro" id="IPR037528">
    <property type="entry name" value="ArgB"/>
</dbReference>
<dbReference type="InterPro" id="IPR001048">
    <property type="entry name" value="Asp/Glu/Uridylate_kinase"/>
</dbReference>
<dbReference type="InterPro" id="IPR001057">
    <property type="entry name" value="Glu/AcGlu_kinase"/>
</dbReference>
<dbReference type="InterPro" id="IPR041727">
    <property type="entry name" value="NAGK-C"/>
</dbReference>
<dbReference type="NCBIfam" id="TIGR00761">
    <property type="entry name" value="argB"/>
    <property type="match status" value="1"/>
</dbReference>
<dbReference type="PANTHER" id="PTHR23342">
    <property type="entry name" value="N-ACETYLGLUTAMATE SYNTHASE"/>
    <property type="match status" value="1"/>
</dbReference>
<dbReference type="PANTHER" id="PTHR23342:SF0">
    <property type="entry name" value="N-ACETYLGLUTAMATE SYNTHASE, MITOCHONDRIAL"/>
    <property type="match status" value="1"/>
</dbReference>
<dbReference type="Pfam" id="PF00696">
    <property type="entry name" value="AA_kinase"/>
    <property type="match status" value="1"/>
</dbReference>
<dbReference type="PIRSF" id="PIRSF000728">
    <property type="entry name" value="NAGK"/>
    <property type="match status" value="1"/>
</dbReference>
<dbReference type="PRINTS" id="PR00474">
    <property type="entry name" value="GLU5KINASE"/>
</dbReference>
<dbReference type="SUPFAM" id="SSF53633">
    <property type="entry name" value="Carbamate kinase-like"/>
    <property type="match status" value="1"/>
</dbReference>
<sequence>MRDSQNTAQTLTESLKYFLKYRDQTVVIKYGGNAMIDEKVKESILKDILLLKTVGIKVVLVHGGGPAIGELLEKYEQKSQFVQGLRVTDKKTAQLALTALAGKVNKSLVQDIIRLGGNAIGVSGIDGKLIEAKPISEDLGYVGEITAIHPEIIERINQTDAVPVIASAGIGLDGEIYNVNADTAASRIAGALSAEQFILLSDVRGLYGNFPDEESFIDEINLTNLEKLVKEKKITDGMIPKIEAIKYAMFEGLGQAVLLDGRVPHALLLELFTDKGQGTMINH</sequence>
<keyword id="KW-0028">Amino-acid biosynthesis</keyword>
<keyword id="KW-0055">Arginine biosynthesis</keyword>
<keyword id="KW-0067">ATP-binding</keyword>
<keyword id="KW-0963">Cytoplasm</keyword>
<keyword id="KW-0418">Kinase</keyword>
<keyword id="KW-0547">Nucleotide-binding</keyword>
<keyword id="KW-0808">Transferase</keyword>
<accession>A2RM00</accession>
<comment type="function">
    <text evidence="1">Catalyzes the ATP-dependent phosphorylation of N-acetyl-L-glutamate.</text>
</comment>
<comment type="catalytic activity">
    <reaction evidence="1">
        <text>N-acetyl-L-glutamate + ATP = N-acetyl-L-glutamyl 5-phosphate + ADP</text>
        <dbReference type="Rhea" id="RHEA:14629"/>
        <dbReference type="ChEBI" id="CHEBI:30616"/>
        <dbReference type="ChEBI" id="CHEBI:44337"/>
        <dbReference type="ChEBI" id="CHEBI:57936"/>
        <dbReference type="ChEBI" id="CHEBI:456216"/>
        <dbReference type="EC" id="2.7.2.8"/>
    </reaction>
</comment>
<comment type="pathway">
    <text evidence="1">Amino-acid biosynthesis; L-arginine biosynthesis; N(2)-acetyl-L-ornithine from L-glutamate: step 2/4.</text>
</comment>
<comment type="subcellular location">
    <subcellularLocation>
        <location evidence="1">Cytoplasm</location>
    </subcellularLocation>
</comment>
<comment type="similarity">
    <text evidence="1">Belongs to the acetylglutamate kinase family. ArgB subfamily.</text>
</comment>
<name>ARGB_LACLM</name>
<gene>
    <name evidence="1" type="primary">argB</name>
    <name type="ordered locus">llmg_1755</name>
</gene>
<protein>
    <recommendedName>
        <fullName evidence="1">Acetylglutamate kinase</fullName>
        <ecNumber evidence="1">2.7.2.8</ecNumber>
    </recommendedName>
    <alternativeName>
        <fullName evidence="1">N-acetyl-L-glutamate 5-phosphotransferase</fullName>
    </alternativeName>
    <alternativeName>
        <fullName evidence="1">NAG kinase</fullName>
        <shortName evidence="1">NAGK</shortName>
    </alternativeName>
</protein>
<organism>
    <name type="scientific">Lactococcus lactis subsp. cremoris (strain MG1363)</name>
    <dbReference type="NCBI Taxonomy" id="416870"/>
    <lineage>
        <taxon>Bacteria</taxon>
        <taxon>Bacillati</taxon>
        <taxon>Bacillota</taxon>
        <taxon>Bacilli</taxon>
        <taxon>Lactobacillales</taxon>
        <taxon>Streptococcaceae</taxon>
        <taxon>Lactococcus</taxon>
        <taxon>Lactococcus cremoris subsp. cremoris</taxon>
    </lineage>
</organism>